<protein>
    <recommendedName>
        <fullName>Transmembrane protein 14 homolog</fullName>
    </recommendedName>
</protein>
<evidence type="ECO:0000255" key="1"/>
<evidence type="ECO:0000305" key="2"/>
<organism>
    <name type="scientific">Dictyostelium discoideum</name>
    <name type="common">Social amoeba</name>
    <dbReference type="NCBI Taxonomy" id="44689"/>
    <lineage>
        <taxon>Eukaryota</taxon>
        <taxon>Amoebozoa</taxon>
        <taxon>Evosea</taxon>
        <taxon>Eumycetozoa</taxon>
        <taxon>Dictyostelia</taxon>
        <taxon>Dictyosteliales</taxon>
        <taxon>Dictyosteliaceae</taxon>
        <taxon>Dictyostelium</taxon>
    </lineage>
</organism>
<name>TM14_DICDI</name>
<reference key="1">
    <citation type="journal article" date="2002" name="Nature">
        <title>Sequence and analysis of chromosome 2 of Dictyostelium discoideum.</title>
        <authorList>
            <person name="Gloeckner G."/>
            <person name="Eichinger L."/>
            <person name="Szafranski K."/>
            <person name="Pachebat J.A."/>
            <person name="Bankier A.T."/>
            <person name="Dear P.H."/>
            <person name="Lehmann R."/>
            <person name="Baumgart C."/>
            <person name="Parra G."/>
            <person name="Abril J.F."/>
            <person name="Guigo R."/>
            <person name="Kumpf K."/>
            <person name="Tunggal B."/>
            <person name="Cox E.C."/>
            <person name="Quail M.A."/>
            <person name="Platzer M."/>
            <person name="Rosenthal A."/>
            <person name="Noegel A.A."/>
        </authorList>
    </citation>
    <scope>NUCLEOTIDE SEQUENCE [LARGE SCALE GENOMIC DNA]</scope>
    <source>
        <strain>AX4</strain>
    </source>
</reference>
<reference key="2">
    <citation type="journal article" date="2005" name="Nature">
        <title>The genome of the social amoeba Dictyostelium discoideum.</title>
        <authorList>
            <person name="Eichinger L."/>
            <person name="Pachebat J.A."/>
            <person name="Gloeckner G."/>
            <person name="Rajandream M.A."/>
            <person name="Sucgang R."/>
            <person name="Berriman M."/>
            <person name="Song J."/>
            <person name="Olsen R."/>
            <person name="Szafranski K."/>
            <person name="Xu Q."/>
            <person name="Tunggal B."/>
            <person name="Kummerfeld S."/>
            <person name="Madera M."/>
            <person name="Konfortov B.A."/>
            <person name="Rivero F."/>
            <person name="Bankier A.T."/>
            <person name="Lehmann R."/>
            <person name="Hamlin N."/>
            <person name="Davies R."/>
            <person name="Gaudet P."/>
            <person name="Fey P."/>
            <person name="Pilcher K."/>
            <person name="Chen G."/>
            <person name="Saunders D."/>
            <person name="Sodergren E.J."/>
            <person name="Davis P."/>
            <person name="Kerhornou A."/>
            <person name="Nie X."/>
            <person name="Hall N."/>
            <person name="Anjard C."/>
            <person name="Hemphill L."/>
            <person name="Bason N."/>
            <person name="Farbrother P."/>
            <person name="Desany B."/>
            <person name="Just E."/>
            <person name="Morio T."/>
            <person name="Rost R."/>
            <person name="Churcher C.M."/>
            <person name="Cooper J."/>
            <person name="Haydock S."/>
            <person name="van Driessche N."/>
            <person name="Cronin A."/>
            <person name="Goodhead I."/>
            <person name="Muzny D.M."/>
            <person name="Mourier T."/>
            <person name="Pain A."/>
            <person name="Lu M."/>
            <person name="Harper D."/>
            <person name="Lindsay R."/>
            <person name="Hauser H."/>
            <person name="James K.D."/>
            <person name="Quiles M."/>
            <person name="Madan Babu M."/>
            <person name="Saito T."/>
            <person name="Buchrieser C."/>
            <person name="Wardroper A."/>
            <person name="Felder M."/>
            <person name="Thangavelu M."/>
            <person name="Johnson D."/>
            <person name="Knights A."/>
            <person name="Loulseged H."/>
            <person name="Mungall K.L."/>
            <person name="Oliver K."/>
            <person name="Price C."/>
            <person name="Quail M.A."/>
            <person name="Urushihara H."/>
            <person name="Hernandez J."/>
            <person name="Rabbinowitsch E."/>
            <person name="Steffen D."/>
            <person name="Sanders M."/>
            <person name="Ma J."/>
            <person name="Kohara Y."/>
            <person name="Sharp S."/>
            <person name="Simmonds M.N."/>
            <person name="Spiegler S."/>
            <person name="Tivey A."/>
            <person name="Sugano S."/>
            <person name="White B."/>
            <person name="Walker D."/>
            <person name="Woodward J.R."/>
            <person name="Winckler T."/>
            <person name="Tanaka Y."/>
            <person name="Shaulsky G."/>
            <person name="Schleicher M."/>
            <person name="Weinstock G.M."/>
            <person name="Rosenthal A."/>
            <person name="Cox E.C."/>
            <person name="Chisholm R.L."/>
            <person name="Gibbs R.A."/>
            <person name="Loomis W.F."/>
            <person name="Platzer M."/>
            <person name="Kay R.R."/>
            <person name="Williams J.G."/>
            <person name="Dear P.H."/>
            <person name="Noegel A.A."/>
            <person name="Barrell B.G."/>
            <person name="Kuspa A."/>
        </authorList>
    </citation>
    <scope>NUCLEOTIDE SEQUENCE [LARGE SCALE GENOMIC DNA]</scope>
    <source>
        <strain>AX4</strain>
    </source>
</reference>
<sequence length="112" mass="11495">MSEQYSNDFKLNAAMAAIVLSGGVIGYAKSKSMPSLIAGSVFGLLYSTSAYYLSQGNSKVGLGVSVLASSLLGGVMGKKAIATSKPIPIILATGSAFTLLSSGKELYNIHKN</sequence>
<keyword id="KW-0472">Membrane</keyword>
<keyword id="KW-1185">Reference proteome</keyword>
<keyword id="KW-0812">Transmembrane</keyword>
<keyword id="KW-1133">Transmembrane helix</keyword>
<proteinExistence type="inferred from homology"/>
<accession>Q75JB5</accession>
<accession>Q55AR2</accession>
<feature type="chain" id="PRO_0000328449" description="Transmembrane protein 14 homolog">
    <location>
        <begin position="1"/>
        <end position="112"/>
    </location>
</feature>
<feature type="transmembrane region" description="Helical" evidence="1">
    <location>
        <begin position="9"/>
        <end position="26"/>
    </location>
</feature>
<feature type="transmembrane region" description="Helical" evidence="1">
    <location>
        <begin position="36"/>
        <end position="53"/>
    </location>
</feature>
<feature type="transmembrane region" description="Helical" evidence="1">
    <location>
        <begin position="60"/>
        <end position="77"/>
    </location>
</feature>
<feature type="transmembrane region" description="Helical" evidence="1">
    <location>
        <begin position="87"/>
        <end position="109"/>
    </location>
</feature>
<gene>
    <name type="ORF">DDB_G0271790</name>
</gene>
<comment type="subcellular location">
    <subcellularLocation>
        <location evidence="2">Membrane</location>
        <topology evidence="2">Multi-pass membrane protein</topology>
    </subcellularLocation>
</comment>
<comment type="similarity">
    <text evidence="2">Belongs to the TMEM14 family.</text>
</comment>
<dbReference type="EMBL" id="AAFI02000006">
    <property type="protein sequence ID" value="EAL71585.1"/>
    <property type="molecule type" value="Genomic_DNA"/>
</dbReference>
<dbReference type="SMR" id="Q75JB5"/>
<dbReference type="FunCoup" id="Q75JB5">
    <property type="interactions" value="36"/>
</dbReference>
<dbReference type="PaxDb" id="44689-DDB0305001"/>
<dbReference type="EnsemblProtists" id="EAL71585">
    <property type="protein sequence ID" value="EAL71585"/>
    <property type="gene ID" value="DDB_G0271790"/>
</dbReference>
<dbReference type="KEGG" id="ddi:DDB_G0271790"/>
<dbReference type="dictyBase" id="DDB_G0271790">
    <property type="gene designation" value="tmem14B"/>
</dbReference>
<dbReference type="VEuPathDB" id="AmoebaDB:DDB_G0271790"/>
<dbReference type="eggNOG" id="ENOG502RIF6">
    <property type="taxonomic scope" value="Eukaryota"/>
</dbReference>
<dbReference type="HOGENOM" id="CLU_096652_3_0_1"/>
<dbReference type="InParanoid" id="Q75JB5"/>
<dbReference type="OMA" id="MIYSTEM"/>
<dbReference type="PhylomeDB" id="Q75JB5"/>
<dbReference type="PRO" id="PR:Q75JB5"/>
<dbReference type="Proteomes" id="UP000002195">
    <property type="component" value="Chromosome 2"/>
</dbReference>
<dbReference type="GO" id="GO:0031966">
    <property type="term" value="C:mitochondrial membrane"/>
    <property type="evidence" value="ECO:0000318"/>
    <property type="project" value="GO_Central"/>
</dbReference>
<dbReference type="GO" id="GO:0070453">
    <property type="term" value="P:regulation of heme biosynthetic process"/>
    <property type="evidence" value="ECO:0000318"/>
    <property type="project" value="GO_Central"/>
</dbReference>
<dbReference type="Gene3D" id="1.10.10.1740">
    <property type="entry name" value="Transmembrane protein 14-like"/>
    <property type="match status" value="1"/>
</dbReference>
<dbReference type="InterPro" id="IPR005349">
    <property type="entry name" value="TMEM14"/>
</dbReference>
<dbReference type="InterPro" id="IPR044890">
    <property type="entry name" value="TMEM14_sf"/>
</dbReference>
<dbReference type="PANTHER" id="PTHR12668:SF52">
    <property type="entry name" value="TRANSMEMBRANE PROTEIN 14 HOMOLOG"/>
    <property type="match status" value="1"/>
</dbReference>
<dbReference type="PANTHER" id="PTHR12668">
    <property type="entry name" value="TRANSMEMBRANE PROTEIN 14, 15"/>
    <property type="match status" value="1"/>
</dbReference>
<dbReference type="Pfam" id="PF03647">
    <property type="entry name" value="Tmemb_14"/>
    <property type="match status" value="1"/>
</dbReference>